<proteinExistence type="inferred from homology"/>
<organism>
    <name type="scientific">Dictyostelium discoideum</name>
    <name type="common">Social amoeba</name>
    <dbReference type="NCBI Taxonomy" id="44689"/>
    <lineage>
        <taxon>Eukaryota</taxon>
        <taxon>Amoebozoa</taxon>
        <taxon>Evosea</taxon>
        <taxon>Eumycetozoa</taxon>
        <taxon>Dictyostelia</taxon>
        <taxon>Dictyosteliales</taxon>
        <taxon>Dictyosteliaceae</taxon>
        <taxon>Dictyostelium</taxon>
    </lineage>
</organism>
<sequence>MSLVPNTICLFDVDGTLTKPRNVITPEMKDFLAGLRTKVELGVVGGSDINKIKEQLGENCINEFHYLFAENGLLSFKDGSLLATQDIKKFLGEENIKKFINFVLHYIADLDIPIKRGTFVEFRNGMINISPIGRNCSQQEREEFEKYDLEHKIRPTMVSILKEKFQSLGLQYSIGGQISFDVFPIGWDKTYCLRHLPEDKYKTIYFFGDKTFVGGNDYEIANDPRITKSFTVTSPTDTKNFLSELFYKQ</sequence>
<comment type="function">
    <text evidence="1">Involved in the synthesis of the GDP-mannose and dolichol-phosphate-mannose required for a number of critical mannosyl transfer reactions.</text>
</comment>
<comment type="catalytic activity">
    <reaction>
        <text>alpha-D-mannose 1-phosphate = D-mannose 6-phosphate</text>
        <dbReference type="Rhea" id="RHEA:11140"/>
        <dbReference type="ChEBI" id="CHEBI:58409"/>
        <dbReference type="ChEBI" id="CHEBI:58735"/>
        <dbReference type="EC" id="5.4.2.8"/>
    </reaction>
</comment>
<comment type="pathway">
    <text>Nucleotide-sugar biosynthesis; GDP-alpha-D-mannose biosynthesis; alpha-D-mannose 1-phosphate from D-fructose 6-phosphate: step 2/2.</text>
</comment>
<comment type="subunit">
    <text evidence="1">Homodimer.</text>
</comment>
<comment type="subcellular location">
    <subcellularLocation>
        <location evidence="1">Cytoplasm</location>
    </subcellularLocation>
</comment>
<comment type="similarity">
    <text evidence="4">Belongs to the eukaryotic PMM family.</text>
</comment>
<accession>Q54X03</accession>
<evidence type="ECO:0000250" key="1"/>
<evidence type="ECO:0000250" key="2">
    <source>
        <dbReference type="UniProtKB" id="P31353"/>
    </source>
</evidence>
<evidence type="ECO:0000250" key="3">
    <source>
        <dbReference type="UniProtKB" id="Q92871"/>
    </source>
</evidence>
<evidence type="ECO:0000305" key="4"/>
<dbReference type="EC" id="5.4.2.8"/>
<dbReference type="EMBL" id="AAFI02000030">
    <property type="protein sequence ID" value="EAL67793.1"/>
    <property type="molecule type" value="Genomic_DNA"/>
</dbReference>
<dbReference type="RefSeq" id="XP_641774.1">
    <property type="nucleotide sequence ID" value="XM_636682.1"/>
</dbReference>
<dbReference type="SMR" id="Q54X03"/>
<dbReference type="FunCoup" id="Q54X03">
    <property type="interactions" value="764"/>
</dbReference>
<dbReference type="STRING" id="44689.Q54X03"/>
<dbReference type="PaxDb" id="44689-DDB0231660"/>
<dbReference type="EnsemblProtists" id="EAL67793">
    <property type="protein sequence ID" value="EAL67793"/>
    <property type="gene ID" value="DDB_G0279289"/>
</dbReference>
<dbReference type="GeneID" id="8621971"/>
<dbReference type="KEGG" id="ddi:DDB_G0279289"/>
<dbReference type="dictyBase" id="DDB_G0279289">
    <property type="gene designation" value="pmmA"/>
</dbReference>
<dbReference type="VEuPathDB" id="AmoebaDB:DDB_G0279289"/>
<dbReference type="eggNOG" id="KOG3189">
    <property type="taxonomic scope" value="Eukaryota"/>
</dbReference>
<dbReference type="HOGENOM" id="CLU_065642_0_0_1"/>
<dbReference type="InParanoid" id="Q54X03"/>
<dbReference type="OMA" id="ISHRVYT"/>
<dbReference type="PhylomeDB" id="Q54X03"/>
<dbReference type="Reactome" id="R-DDI-446205">
    <property type="pathway name" value="Synthesis of GDP-mannose"/>
</dbReference>
<dbReference type="UniPathway" id="UPA00126">
    <property type="reaction ID" value="UER00424"/>
</dbReference>
<dbReference type="PRO" id="PR:Q54X03"/>
<dbReference type="Proteomes" id="UP000002195">
    <property type="component" value="Chromosome 3"/>
</dbReference>
<dbReference type="GO" id="GO:0005829">
    <property type="term" value="C:cytosol"/>
    <property type="evidence" value="ECO:0000318"/>
    <property type="project" value="GO_Central"/>
</dbReference>
<dbReference type="GO" id="GO:0046872">
    <property type="term" value="F:metal ion binding"/>
    <property type="evidence" value="ECO:0007669"/>
    <property type="project" value="UniProtKB-KW"/>
</dbReference>
<dbReference type="GO" id="GO:0004615">
    <property type="term" value="F:phosphomannomutase activity"/>
    <property type="evidence" value="ECO:0000318"/>
    <property type="project" value="GO_Central"/>
</dbReference>
<dbReference type="GO" id="GO:0009298">
    <property type="term" value="P:GDP-mannose biosynthetic process"/>
    <property type="evidence" value="ECO:0007669"/>
    <property type="project" value="UniProtKB-UniPathway"/>
</dbReference>
<dbReference type="GO" id="GO:0006013">
    <property type="term" value="P:mannose metabolic process"/>
    <property type="evidence" value="ECO:0000318"/>
    <property type="project" value="GO_Central"/>
</dbReference>
<dbReference type="GO" id="GO:0006487">
    <property type="term" value="P:protein N-linked glycosylation"/>
    <property type="evidence" value="ECO:0000318"/>
    <property type="project" value="GO_Central"/>
</dbReference>
<dbReference type="CDD" id="cd02585">
    <property type="entry name" value="HAD_PMM"/>
    <property type="match status" value="1"/>
</dbReference>
<dbReference type="FunFam" id="3.30.1240.20:FF:000001">
    <property type="entry name" value="Phosphomannomutase"/>
    <property type="match status" value="1"/>
</dbReference>
<dbReference type="Gene3D" id="3.30.1240.20">
    <property type="match status" value="1"/>
</dbReference>
<dbReference type="Gene3D" id="3.40.50.1000">
    <property type="entry name" value="HAD superfamily/HAD-like"/>
    <property type="match status" value="1"/>
</dbReference>
<dbReference type="InterPro" id="IPR036412">
    <property type="entry name" value="HAD-like_sf"/>
</dbReference>
<dbReference type="InterPro" id="IPR006379">
    <property type="entry name" value="HAD-SF_hydro_IIB"/>
</dbReference>
<dbReference type="InterPro" id="IPR023214">
    <property type="entry name" value="HAD_sf"/>
</dbReference>
<dbReference type="InterPro" id="IPR005002">
    <property type="entry name" value="PMM"/>
</dbReference>
<dbReference type="InterPro" id="IPR043169">
    <property type="entry name" value="PMM_cap"/>
</dbReference>
<dbReference type="NCBIfam" id="TIGR01484">
    <property type="entry name" value="HAD-SF-IIB"/>
    <property type="match status" value="1"/>
</dbReference>
<dbReference type="PANTHER" id="PTHR10466">
    <property type="entry name" value="PHOSPHOMANNOMUTASE"/>
    <property type="match status" value="1"/>
</dbReference>
<dbReference type="PANTHER" id="PTHR10466:SF0">
    <property type="entry name" value="PHOSPHOMANNOMUTASE"/>
    <property type="match status" value="1"/>
</dbReference>
<dbReference type="Pfam" id="PF03332">
    <property type="entry name" value="PMM"/>
    <property type="match status" value="1"/>
</dbReference>
<dbReference type="SFLD" id="SFLDF00445">
    <property type="entry name" value="alpha-phosphomannomutase"/>
    <property type="match status" value="1"/>
</dbReference>
<dbReference type="SFLD" id="SFLDS00003">
    <property type="entry name" value="Haloacid_Dehalogenase"/>
    <property type="match status" value="1"/>
</dbReference>
<dbReference type="SUPFAM" id="SSF56784">
    <property type="entry name" value="HAD-like"/>
    <property type="match status" value="1"/>
</dbReference>
<protein>
    <recommendedName>
        <fullName>Phosphomannomutase 1</fullName>
        <shortName>PMM 1</shortName>
        <ecNumber>5.4.2.8</ecNumber>
    </recommendedName>
</protein>
<name>PMM1_DICDI</name>
<keyword id="KW-0963">Cytoplasm</keyword>
<keyword id="KW-0413">Isomerase</keyword>
<keyword id="KW-0460">Magnesium</keyword>
<keyword id="KW-0479">Metal-binding</keyword>
<keyword id="KW-1185">Reference proteome</keyword>
<feature type="chain" id="PRO_0000327516" description="Phosphomannomutase 1">
    <location>
        <begin position="1"/>
        <end position="249"/>
    </location>
</feature>
<feature type="active site" description="Nucleophile" evidence="3">
    <location>
        <position position="12"/>
    </location>
</feature>
<feature type="active site" description="Proton donor/acceptor" evidence="3">
    <location>
        <position position="14"/>
    </location>
</feature>
<feature type="binding site" evidence="3">
    <location>
        <position position="12"/>
    </location>
    <ligand>
        <name>Mg(2+)</name>
        <dbReference type="ChEBI" id="CHEBI:18420"/>
        <label>1</label>
    </ligand>
</feature>
<feature type="binding site" evidence="3">
    <location>
        <position position="14"/>
    </location>
    <ligand>
        <name>Mg(2+)</name>
        <dbReference type="ChEBI" id="CHEBI:18420"/>
        <label>1</label>
    </ligand>
</feature>
<feature type="binding site" evidence="3">
    <location>
        <position position="21"/>
    </location>
    <ligand>
        <name>alpha-D-mannose 1-phosphate</name>
        <dbReference type="ChEBI" id="CHEBI:58409"/>
    </ligand>
</feature>
<feature type="binding site" evidence="3">
    <location>
        <position position="123"/>
    </location>
    <ligand>
        <name>alpha-D-mannose 1-phosphate</name>
        <dbReference type="ChEBI" id="CHEBI:58409"/>
    </ligand>
</feature>
<feature type="binding site" evidence="3">
    <location>
        <position position="134"/>
    </location>
    <ligand>
        <name>alpha-D-mannose 1-phosphate</name>
        <dbReference type="ChEBI" id="CHEBI:58409"/>
    </ligand>
</feature>
<feature type="binding site" evidence="3">
    <location>
        <position position="141"/>
    </location>
    <ligand>
        <name>alpha-D-mannose 1-phosphate</name>
        <dbReference type="ChEBI" id="CHEBI:58409"/>
    </ligand>
</feature>
<feature type="binding site" evidence="3">
    <location>
        <position position="179"/>
    </location>
    <ligand>
        <name>alpha-D-mannose 1-phosphate</name>
        <dbReference type="ChEBI" id="CHEBI:58409"/>
    </ligand>
</feature>
<feature type="binding site" evidence="3">
    <location>
        <position position="181"/>
    </location>
    <ligand>
        <name>alpha-D-mannose 1-phosphate</name>
        <dbReference type="ChEBI" id="CHEBI:58409"/>
    </ligand>
</feature>
<feature type="binding site" evidence="2">
    <location>
        <position position="209"/>
    </location>
    <ligand>
        <name>Mg(2+)</name>
        <dbReference type="ChEBI" id="CHEBI:18420"/>
        <label>1</label>
    </ligand>
</feature>
<feature type="binding site" evidence="3">
    <location>
        <position position="223"/>
    </location>
    <ligand>
        <name>Mg(2+)</name>
        <dbReference type="ChEBI" id="CHEBI:18420"/>
        <label>2</label>
    </ligand>
</feature>
<feature type="binding site" evidence="3">
    <location>
        <position position="227"/>
    </location>
    <ligand>
        <name>Mg(2+)</name>
        <dbReference type="ChEBI" id="CHEBI:18420"/>
        <label>2</label>
    </ligand>
</feature>
<reference key="1">
    <citation type="journal article" date="2005" name="Nature">
        <title>The genome of the social amoeba Dictyostelium discoideum.</title>
        <authorList>
            <person name="Eichinger L."/>
            <person name="Pachebat J.A."/>
            <person name="Gloeckner G."/>
            <person name="Rajandream M.A."/>
            <person name="Sucgang R."/>
            <person name="Berriman M."/>
            <person name="Song J."/>
            <person name="Olsen R."/>
            <person name="Szafranski K."/>
            <person name="Xu Q."/>
            <person name="Tunggal B."/>
            <person name="Kummerfeld S."/>
            <person name="Madera M."/>
            <person name="Konfortov B.A."/>
            <person name="Rivero F."/>
            <person name="Bankier A.T."/>
            <person name="Lehmann R."/>
            <person name="Hamlin N."/>
            <person name="Davies R."/>
            <person name="Gaudet P."/>
            <person name="Fey P."/>
            <person name="Pilcher K."/>
            <person name="Chen G."/>
            <person name="Saunders D."/>
            <person name="Sodergren E.J."/>
            <person name="Davis P."/>
            <person name="Kerhornou A."/>
            <person name="Nie X."/>
            <person name="Hall N."/>
            <person name="Anjard C."/>
            <person name="Hemphill L."/>
            <person name="Bason N."/>
            <person name="Farbrother P."/>
            <person name="Desany B."/>
            <person name="Just E."/>
            <person name="Morio T."/>
            <person name="Rost R."/>
            <person name="Churcher C.M."/>
            <person name="Cooper J."/>
            <person name="Haydock S."/>
            <person name="van Driessche N."/>
            <person name="Cronin A."/>
            <person name="Goodhead I."/>
            <person name="Muzny D.M."/>
            <person name="Mourier T."/>
            <person name="Pain A."/>
            <person name="Lu M."/>
            <person name="Harper D."/>
            <person name="Lindsay R."/>
            <person name="Hauser H."/>
            <person name="James K.D."/>
            <person name="Quiles M."/>
            <person name="Madan Babu M."/>
            <person name="Saito T."/>
            <person name="Buchrieser C."/>
            <person name="Wardroper A."/>
            <person name="Felder M."/>
            <person name="Thangavelu M."/>
            <person name="Johnson D."/>
            <person name="Knights A."/>
            <person name="Loulseged H."/>
            <person name="Mungall K.L."/>
            <person name="Oliver K."/>
            <person name="Price C."/>
            <person name="Quail M.A."/>
            <person name="Urushihara H."/>
            <person name="Hernandez J."/>
            <person name="Rabbinowitsch E."/>
            <person name="Steffen D."/>
            <person name="Sanders M."/>
            <person name="Ma J."/>
            <person name="Kohara Y."/>
            <person name="Sharp S."/>
            <person name="Simmonds M.N."/>
            <person name="Spiegler S."/>
            <person name="Tivey A."/>
            <person name="Sugano S."/>
            <person name="White B."/>
            <person name="Walker D."/>
            <person name="Woodward J.R."/>
            <person name="Winckler T."/>
            <person name="Tanaka Y."/>
            <person name="Shaulsky G."/>
            <person name="Schleicher M."/>
            <person name="Weinstock G.M."/>
            <person name="Rosenthal A."/>
            <person name="Cox E.C."/>
            <person name="Chisholm R.L."/>
            <person name="Gibbs R.A."/>
            <person name="Loomis W.F."/>
            <person name="Platzer M."/>
            <person name="Kay R.R."/>
            <person name="Williams J.G."/>
            <person name="Dear P.H."/>
            <person name="Noegel A.A."/>
            <person name="Barrell B.G."/>
            <person name="Kuspa A."/>
        </authorList>
    </citation>
    <scope>NUCLEOTIDE SEQUENCE [LARGE SCALE GENOMIC DNA]</scope>
    <source>
        <strain>AX4</strain>
    </source>
</reference>
<gene>
    <name type="primary">pmmA</name>
    <name type="ORF">DDB_G0279289</name>
</gene>